<feature type="chain" id="PRO_0000191224" description="ATP-dependent protease ATP-binding subunit-like protein">
    <location>
        <begin position="1"/>
        <end position="351"/>
    </location>
</feature>
<feature type="region of interest" description="Disordered" evidence="2">
    <location>
        <begin position="1"/>
        <end position="26"/>
    </location>
</feature>
<feature type="binding site" evidence="1">
    <location>
        <begin position="79"/>
        <end position="86"/>
    </location>
    <ligand>
        <name>ATP</name>
        <dbReference type="ChEBI" id="CHEBI:30616"/>
    </ligand>
</feature>
<sequence>MPYITDMLRDRNSAATPPAEERSEPVPVGAFDARRLSKALSSKIVGQQAAVDAVVRAISIAHVGATDPTRPLANILLVGPTGVGKTELVRRVAAELRSGPDDLCRIDMNALAQEHYAASFSGAPPGYAGSKESFTLFDKNTVEGDPYTPGIVLFDEVEKADPTVLRALLQVLDNGELRLANGQQKISFRNSYVFLTSNLGSAAVAERRRSHLRQLADRVRIDRPRHGHHLVQRALEKFFDPEFFNRIDETVILDEFDDQTAEQVTRLEIELITTRLARRGIDVEVDDSAVALLQRRGFDPVYGARGLRRTIRNVLADPVAGAVLDLRPVGTQPLALQARAVGDQIQVKKAP</sequence>
<proteinExistence type="inferred from homology"/>
<dbReference type="EMBL" id="M76451">
    <property type="protein sequence ID" value="AAA22991.1"/>
    <property type="molecule type" value="Genomic_DNA"/>
</dbReference>
<dbReference type="SMR" id="Q01357"/>
<dbReference type="STRING" id="1833.XU06_02565"/>
<dbReference type="MEROPS" id="X20.001"/>
<dbReference type="GO" id="GO:0005737">
    <property type="term" value="C:cytoplasm"/>
    <property type="evidence" value="ECO:0007669"/>
    <property type="project" value="TreeGrafter"/>
</dbReference>
<dbReference type="GO" id="GO:0005524">
    <property type="term" value="F:ATP binding"/>
    <property type="evidence" value="ECO:0007669"/>
    <property type="project" value="UniProtKB-KW"/>
</dbReference>
<dbReference type="GO" id="GO:0016887">
    <property type="term" value="F:ATP hydrolysis activity"/>
    <property type="evidence" value="ECO:0007669"/>
    <property type="project" value="InterPro"/>
</dbReference>
<dbReference type="GO" id="GO:0034605">
    <property type="term" value="P:cellular response to heat"/>
    <property type="evidence" value="ECO:0007669"/>
    <property type="project" value="TreeGrafter"/>
</dbReference>
<dbReference type="CDD" id="cd19499">
    <property type="entry name" value="RecA-like_ClpB_Hsp104-like"/>
    <property type="match status" value="1"/>
</dbReference>
<dbReference type="Gene3D" id="1.10.8.60">
    <property type="match status" value="1"/>
</dbReference>
<dbReference type="Gene3D" id="3.40.50.300">
    <property type="entry name" value="P-loop containing nucleotide triphosphate hydrolases"/>
    <property type="match status" value="1"/>
</dbReference>
<dbReference type="InterPro" id="IPR003593">
    <property type="entry name" value="AAA+_ATPase"/>
</dbReference>
<dbReference type="InterPro" id="IPR003959">
    <property type="entry name" value="ATPase_AAA_core"/>
</dbReference>
<dbReference type="InterPro" id="IPR019489">
    <property type="entry name" value="Clp_ATPase_C"/>
</dbReference>
<dbReference type="InterPro" id="IPR001270">
    <property type="entry name" value="ClpA/B"/>
</dbReference>
<dbReference type="InterPro" id="IPR050130">
    <property type="entry name" value="ClpA_ClpB"/>
</dbReference>
<dbReference type="InterPro" id="IPR027417">
    <property type="entry name" value="P-loop_NTPase"/>
</dbReference>
<dbReference type="PANTHER" id="PTHR11638">
    <property type="entry name" value="ATP-DEPENDENT CLP PROTEASE"/>
    <property type="match status" value="1"/>
</dbReference>
<dbReference type="PANTHER" id="PTHR11638:SF18">
    <property type="entry name" value="HEAT SHOCK PROTEIN 104"/>
    <property type="match status" value="1"/>
</dbReference>
<dbReference type="Pfam" id="PF07724">
    <property type="entry name" value="AAA_2"/>
    <property type="match status" value="1"/>
</dbReference>
<dbReference type="Pfam" id="PF10431">
    <property type="entry name" value="ClpB_D2-small"/>
    <property type="match status" value="1"/>
</dbReference>
<dbReference type="PRINTS" id="PR00300">
    <property type="entry name" value="CLPPROTEASEA"/>
</dbReference>
<dbReference type="SMART" id="SM00382">
    <property type="entry name" value="AAA"/>
    <property type="match status" value="1"/>
</dbReference>
<dbReference type="SMART" id="SM01086">
    <property type="entry name" value="ClpB_D2-small"/>
    <property type="match status" value="1"/>
</dbReference>
<dbReference type="SUPFAM" id="SSF52540">
    <property type="entry name" value="P-loop containing nucleoside triphosphate hydrolases"/>
    <property type="match status" value="1"/>
</dbReference>
<accession>Q01357</accession>
<comment type="similarity">
    <text evidence="3">Belongs to the ClpA/ClpB family.</text>
</comment>
<reference key="1">
    <citation type="journal article" date="1992" name="Gene">
        <title>Cloning and primary structure of the wide-spectrum amidase from Brevibacterium sp. R312: high homology to the amiE product from Pseudomonas aeruginosa.</title>
        <authorList>
            <person name="Soubrier F."/>
            <person name="Levy-Schil S."/>
            <person name="Mayaux J.F."/>
            <person name="Petre D."/>
            <person name="Arnaud A."/>
            <person name="Crouzet J."/>
        </authorList>
    </citation>
    <scope>NUCLEOTIDE SEQUENCE [GENOMIC DNA]</scope>
    <source>
        <strain>Brevibacterium sp. R312</strain>
    </source>
</reference>
<name>ADPR_RHOER</name>
<evidence type="ECO:0000250" key="1"/>
<evidence type="ECO:0000256" key="2">
    <source>
        <dbReference type="SAM" id="MobiDB-lite"/>
    </source>
</evidence>
<evidence type="ECO:0000305" key="3"/>
<organism>
    <name type="scientific">Rhodococcus erythropolis</name>
    <name type="common">Arthrobacter picolinophilus</name>
    <dbReference type="NCBI Taxonomy" id="1833"/>
    <lineage>
        <taxon>Bacteria</taxon>
        <taxon>Bacillati</taxon>
        <taxon>Actinomycetota</taxon>
        <taxon>Actinomycetes</taxon>
        <taxon>Mycobacteriales</taxon>
        <taxon>Nocardiaceae</taxon>
        <taxon>Rhodococcus</taxon>
        <taxon>Rhodococcus erythropolis group</taxon>
    </lineage>
</organism>
<protein>
    <recommendedName>
        <fullName>ATP-dependent protease ATP-binding subunit-like protein</fullName>
    </recommendedName>
</protein>
<keyword id="KW-0067">ATP-binding</keyword>
<keyword id="KW-0143">Chaperone</keyword>
<keyword id="KW-0547">Nucleotide-binding</keyword>